<protein>
    <recommendedName>
        <fullName evidence="1">RNA-binding protein Hfq</fullName>
    </recommendedName>
</protein>
<evidence type="ECO:0000255" key="1">
    <source>
        <dbReference type="HAMAP-Rule" id="MF_00436"/>
    </source>
</evidence>
<evidence type="ECO:0000255" key="2">
    <source>
        <dbReference type="PROSITE-ProRule" id="PRU01346"/>
    </source>
</evidence>
<name>HFQ_HYPNA</name>
<comment type="function">
    <text evidence="1">RNA chaperone that binds small regulatory RNA (sRNAs) and mRNAs to facilitate mRNA translational regulation in response to envelope stress, environmental stress and changes in metabolite concentrations. Also binds with high specificity to tRNAs.</text>
</comment>
<comment type="subunit">
    <text evidence="1">Homohexamer.</text>
</comment>
<comment type="similarity">
    <text evidence="1">Belongs to the Hfq family.</text>
</comment>
<sequence>MSADKKQNLQDTFLNAVRKSRTPLTVFLVNGVKLQGVVTWFDNFCILLRGDGRPPQLVYKHAISTIAPSAPVQLFDEEMGGD</sequence>
<reference key="1">
    <citation type="journal article" date="2006" name="J. Bacteriol.">
        <title>Comparative genomic evidence for a close relationship between the dimorphic prosthecate bacteria Hyphomonas neptunium and Caulobacter crescentus.</title>
        <authorList>
            <person name="Badger J.H."/>
            <person name="Hoover T.R."/>
            <person name="Brun Y.V."/>
            <person name="Weiner R.M."/>
            <person name="Laub M.T."/>
            <person name="Alexandre G."/>
            <person name="Mrazek J."/>
            <person name="Ren Q."/>
            <person name="Paulsen I.T."/>
            <person name="Nelson K.E."/>
            <person name="Khouri H.M."/>
            <person name="Radune D."/>
            <person name="Sosa J."/>
            <person name="Dodson R.J."/>
            <person name="Sullivan S.A."/>
            <person name="Rosovitz M.J."/>
            <person name="Madupu R."/>
            <person name="Brinkac L.M."/>
            <person name="Durkin A.S."/>
            <person name="Daugherty S.C."/>
            <person name="Kothari S.P."/>
            <person name="Giglio M.G."/>
            <person name="Zhou L."/>
            <person name="Haft D.H."/>
            <person name="Selengut J.D."/>
            <person name="Davidsen T.M."/>
            <person name="Yang Q."/>
            <person name="Zafar N."/>
            <person name="Ward N.L."/>
        </authorList>
    </citation>
    <scope>NUCLEOTIDE SEQUENCE [LARGE SCALE GENOMIC DNA]</scope>
    <source>
        <strain>ATCC 15444</strain>
    </source>
</reference>
<keyword id="KW-1185">Reference proteome</keyword>
<keyword id="KW-0694">RNA-binding</keyword>
<keyword id="KW-0346">Stress response</keyword>
<gene>
    <name evidence="1" type="primary">hfq</name>
    <name type="ordered locus">HNE_2006</name>
</gene>
<organism>
    <name type="scientific">Hyphomonas neptunium (strain ATCC 15444)</name>
    <dbReference type="NCBI Taxonomy" id="228405"/>
    <lineage>
        <taxon>Bacteria</taxon>
        <taxon>Pseudomonadati</taxon>
        <taxon>Pseudomonadota</taxon>
        <taxon>Alphaproteobacteria</taxon>
        <taxon>Hyphomonadales</taxon>
        <taxon>Hyphomonadaceae</taxon>
        <taxon>Hyphomonas</taxon>
    </lineage>
</organism>
<feature type="chain" id="PRO_1000080668" description="RNA-binding protein Hfq">
    <location>
        <begin position="1"/>
        <end position="82"/>
    </location>
</feature>
<feature type="domain" description="Sm" evidence="2">
    <location>
        <begin position="11"/>
        <end position="72"/>
    </location>
</feature>
<dbReference type="EMBL" id="CP000158">
    <property type="protein sequence ID" value="ABI76298.1"/>
    <property type="molecule type" value="Genomic_DNA"/>
</dbReference>
<dbReference type="RefSeq" id="WP_011647005.1">
    <property type="nucleotide sequence ID" value="NC_008358.1"/>
</dbReference>
<dbReference type="SMR" id="Q0C0N8"/>
<dbReference type="STRING" id="228405.HNE_2006"/>
<dbReference type="KEGG" id="hne:HNE_2006"/>
<dbReference type="eggNOG" id="COG1923">
    <property type="taxonomic scope" value="Bacteria"/>
</dbReference>
<dbReference type="HOGENOM" id="CLU_113688_0_0_5"/>
<dbReference type="Proteomes" id="UP000001959">
    <property type="component" value="Chromosome"/>
</dbReference>
<dbReference type="GO" id="GO:0005829">
    <property type="term" value="C:cytosol"/>
    <property type="evidence" value="ECO:0007669"/>
    <property type="project" value="TreeGrafter"/>
</dbReference>
<dbReference type="GO" id="GO:0003723">
    <property type="term" value="F:RNA binding"/>
    <property type="evidence" value="ECO:0007669"/>
    <property type="project" value="UniProtKB-UniRule"/>
</dbReference>
<dbReference type="GO" id="GO:0006355">
    <property type="term" value="P:regulation of DNA-templated transcription"/>
    <property type="evidence" value="ECO:0007669"/>
    <property type="project" value="InterPro"/>
</dbReference>
<dbReference type="GO" id="GO:0043487">
    <property type="term" value="P:regulation of RNA stability"/>
    <property type="evidence" value="ECO:0007669"/>
    <property type="project" value="TreeGrafter"/>
</dbReference>
<dbReference type="GO" id="GO:0045974">
    <property type="term" value="P:regulation of translation, ncRNA-mediated"/>
    <property type="evidence" value="ECO:0007669"/>
    <property type="project" value="TreeGrafter"/>
</dbReference>
<dbReference type="CDD" id="cd01716">
    <property type="entry name" value="Hfq"/>
    <property type="match status" value="1"/>
</dbReference>
<dbReference type="Gene3D" id="2.30.30.100">
    <property type="match status" value="1"/>
</dbReference>
<dbReference type="HAMAP" id="MF_00436">
    <property type="entry name" value="Hfq"/>
    <property type="match status" value="1"/>
</dbReference>
<dbReference type="InterPro" id="IPR005001">
    <property type="entry name" value="Hfq"/>
</dbReference>
<dbReference type="InterPro" id="IPR010920">
    <property type="entry name" value="LSM_dom_sf"/>
</dbReference>
<dbReference type="InterPro" id="IPR047575">
    <property type="entry name" value="Sm"/>
</dbReference>
<dbReference type="NCBIfam" id="TIGR02383">
    <property type="entry name" value="Hfq"/>
    <property type="match status" value="1"/>
</dbReference>
<dbReference type="NCBIfam" id="NF001602">
    <property type="entry name" value="PRK00395.1"/>
    <property type="match status" value="1"/>
</dbReference>
<dbReference type="PANTHER" id="PTHR34772">
    <property type="entry name" value="RNA-BINDING PROTEIN HFQ"/>
    <property type="match status" value="1"/>
</dbReference>
<dbReference type="PANTHER" id="PTHR34772:SF1">
    <property type="entry name" value="RNA-BINDING PROTEIN HFQ"/>
    <property type="match status" value="1"/>
</dbReference>
<dbReference type="Pfam" id="PF17209">
    <property type="entry name" value="Hfq"/>
    <property type="match status" value="1"/>
</dbReference>
<dbReference type="SUPFAM" id="SSF50182">
    <property type="entry name" value="Sm-like ribonucleoproteins"/>
    <property type="match status" value="1"/>
</dbReference>
<dbReference type="PROSITE" id="PS52002">
    <property type="entry name" value="SM"/>
    <property type="match status" value="1"/>
</dbReference>
<proteinExistence type="inferred from homology"/>
<accession>Q0C0N8</accession>